<organism>
    <name type="scientific">Eremothecium gossypii (strain ATCC 10895 / CBS 109.51 / FGSC 9923 / NRRL Y-1056)</name>
    <name type="common">Yeast</name>
    <name type="synonym">Ashbya gossypii</name>
    <dbReference type="NCBI Taxonomy" id="284811"/>
    <lineage>
        <taxon>Eukaryota</taxon>
        <taxon>Fungi</taxon>
        <taxon>Dikarya</taxon>
        <taxon>Ascomycota</taxon>
        <taxon>Saccharomycotina</taxon>
        <taxon>Saccharomycetes</taxon>
        <taxon>Saccharomycetales</taxon>
        <taxon>Saccharomycetaceae</taxon>
        <taxon>Eremothecium</taxon>
    </lineage>
</organism>
<protein>
    <recommendedName>
        <fullName>Altered inheritance of mitochondria protein 9, mitochondrial</fullName>
    </recommendedName>
    <alternativeName>
        <fullName>Found in mitochondrial proteome protein 29</fullName>
    </alternativeName>
</protein>
<evidence type="ECO:0000250" key="1"/>
<evidence type="ECO:0000255" key="2"/>
<evidence type="ECO:0000256" key="3">
    <source>
        <dbReference type="SAM" id="MobiDB-lite"/>
    </source>
</evidence>
<evidence type="ECO:0000305" key="4"/>
<reference key="1">
    <citation type="journal article" date="2004" name="Science">
        <title>The Ashbya gossypii genome as a tool for mapping the ancient Saccharomyces cerevisiae genome.</title>
        <authorList>
            <person name="Dietrich F.S."/>
            <person name="Voegeli S."/>
            <person name="Brachat S."/>
            <person name="Lerch A."/>
            <person name="Gates K."/>
            <person name="Steiner S."/>
            <person name="Mohr C."/>
            <person name="Poehlmann R."/>
            <person name="Luedi P."/>
            <person name="Choi S."/>
            <person name="Wing R.A."/>
            <person name="Flavier A."/>
            <person name="Gaffney T.D."/>
            <person name="Philippsen P."/>
        </authorList>
    </citation>
    <scope>NUCLEOTIDE SEQUENCE [LARGE SCALE GENOMIC DNA]</scope>
    <source>
        <strain>ATCC 10895 / CBS 109.51 / FGSC 9923 / NRRL Y-1056</strain>
    </source>
</reference>
<reference key="2">
    <citation type="journal article" date="2013" name="G3 (Bethesda)">
        <title>Genomes of Ashbya fungi isolated from insects reveal four mating-type loci, numerous translocations, lack of transposons, and distinct gene duplications.</title>
        <authorList>
            <person name="Dietrich F.S."/>
            <person name="Voegeli S."/>
            <person name="Kuo S."/>
            <person name="Philippsen P."/>
        </authorList>
    </citation>
    <scope>GENOME REANNOTATION</scope>
    <source>
        <strain>ATCC 10895 / CBS 109.51 / FGSC 9923 / NRRL Y-1056</strain>
    </source>
</reference>
<proteinExistence type="inferred from homology"/>
<accession>Q75CE0</accession>
<sequence>MLRHSLRSASKLQSKNVRLLRAAPLLLKRSLSNDPKEVFTKLTDENDPQRDAFFKYGWGSWLKNDKQEKEKRVTRFSIEGLNKVLSDLHEQSAQADKTAKTDAVPPPSYNPNLTVSLPHNVTSKHLGTPKRGESVRVVSMASFHEGKHHRIYKIDTNAGKSFVLRIPYGIDEENTLAYRVKSEVATMDFADLKLGMNVPKVFCFGVNALNPIRQPFILEEYVPGRLLMKDWMPLASDSADGSHKEKLNSVIQPISEFQAKLAETEFTAFGSLYFAKDYRESNEPAYKSDTDGDLADRWRIGPSVERCFWRKKSALPFEQRKQYLGPWTISQPLDIVKSLGSLEAENARARLAIKQADASPEAEIDEQVLRDQITAFENLAKLAPVMYNLKTKSIPNMDAIVKPRLCHPDLDPMNVILHEENGKPYLLDFEGTTVKPFILHNNPQFVAYDGPKIYDLERDVENYSKLNAQEKDQYEFMYKRTRNQYLWESQLNQNAKHLISSIAPLVKLLRSPYVYAVQRKYDQEYLLIDEALVQLKEVWELFAKNELTNSEQFPVEFTEEWLRQHAEKLNAYHEKLIAEPFSATQGWMPQDLFDNLVKSGVLVKDANGDHSLKQ</sequence>
<name>AIM9_EREGS</name>
<gene>
    <name type="primary">AIM9</name>
    <name type="synonym">FMP29</name>
    <name type="ordered locus">ACL031C</name>
</gene>
<keyword id="KW-0496">Mitochondrion</keyword>
<keyword id="KW-1185">Reference proteome</keyword>
<keyword id="KW-0809">Transit peptide</keyword>
<comment type="subcellular location">
    <subcellularLocation>
        <location evidence="1">Mitochondrion</location>
    </subcellularLocation>
</comment>
<comment type="similarity">
    <text evidence="4">Belongs to the AIM9 family.</text>
</comment>
<dbReference type="EMBL" id="AE016816">
    <property type="protein sequence ID" value="AAS51197.2"/>
    <property type="molecule type" value="Genomic_DNA"/>
</dbReference>
<dbReference type="RefSeq" id="NP_983373.2">
    <property type="nucleotide sequence ID" value="NM_208726.2"/>
</dbReference>
<dbReference type="FunCoup" id="Q75CE0">
    <property type="interactions" value="23"/>
</dbReference>
<dbReference type="STRING" id="284811.Q75CE0"/>
<dbReference type="EnsemblFungi" id="AAS51197">
    <property type="protein sequence ID" value="AAS51197"/>
    <property type="gene ID" value="AGOS_ACL031C"/>
</dbReference>
<dbReference type="GeneID" id="4619498"/>
<dbReference type="KEGG" id="ago:AGOS_ACL031C"/>
<dbReference type="eggNOG" id="ENOG502QV1E">
    <property type="taxonomic scope" value="Eukaryota"/>
</dbReference>
<dbReference type="HOGENOM" id="CLU_019189_0_1_1"/>
<dbReference type="InParanoid" id="Q75CE0"/>
<dbReference type="OMA" id="GWIPQDM"/>
<dbReference type="OrthoDB" id="2968323at2759"/>
<dbReference type="Proteomes" id="UP000000591">
    <property type="component" value="Chromosome III"/>
</dbReference>
<dbReference type="GO" id="GO:0005739">
    <property type="term" value="C:mitochondrion"/>
    <property type="evidence" value="ECO:0007669"/>
    <property type="project" value="UniProtKB-SubCell"/>
</dbReference>
<dbReference type="InterPro" id="IPR002575">
    <property type="entry name" value="Aminoglycoside_PTrfase"/>
</dbReference>
<dbReference type="InterPro" id="IPR011009">
    <property type="entry name" value="Kinase-like_dom_sf"/>
</dbReference>
<dbReference type="InterPro" id="IPR051035">
    <property type="entry name" value="Mito_inheritance_9"/>
</dbReference>
<dbReference type="PANTHER" id="PTHR36091">
    <property type="entry name" value="ALTERED INHERITANCE OF MITOCHONDRIA PROTEIN 9, MITOCHONDRIAL"/>
    <property type="match status" value="1"/>
</dbReference>
<dbReference type="PANTHER" id="PTHR36091:SF1">
    <property type="entry name" value="ALTERED INHERITANCE OF MITOCHONDRIA PROTEIN 9, MITOCHONDRIAL"/>
    <property type="match status" value="1"/>
</dbReference>
<dbReference type="Pfam" id="PF01636">
    <property type="entry name" value="APH"/>
    <property type="match status" value="1"/>
</dbReference>
<dbReference type="SUPFAM" id="SSF56112">
    <property type="entry name" value="Protein kinase-like (PK-like)"/>
    <property type="match status" value="1"/>
</dbReference>
<feature type="transit peptide" description="Mitochondrion" evidence="2">
    <location>
        <begin position="1"/>
        <end position="38"/>
    </location>
</feature>
<feature type="chain" id="PRO_0000408715" description="Altered inheritance of mitochondria protein 9, mitochondrial">
    <location>
        <begin position="39"/>
        <end position="614"/>
    </location>
</feature>
<feature type="region of interest" description="Disordered" evidence="3">
    <location>
        <begin position="90"/>
        <end position="129"/>
    </location>
</feature>
<feature type="compositionally biased region" description="Polar residues" evidence="3">
    <location>
        <begin position="110"/>
        <end position="125"/>
    </location>
</feature>